<accession>Q2JIA6</accession>
<evidence type="ECO:0000255" key="1">
    <source>
        <dbReference type="HAMAP-Rule" id="MF_00096"/>
    </source>
</evidence>
<evidence type="ECO:0000256" key="2">
    <source>
        <dbReference type="SAM" id="MobiDB-lite"/>
    </source>
</evidence>
<organism>
    <name type="scientific">Synechococcus sp. (strain JA-2-3B'a(2-13))</name>
    <name type="common">Cyanobacteria bacterium Yellowstone B-Prime</name>
    <dbReference type="NCBI Taxonomy" id="321332"/>
    <lineage>
        <taxon>Bacteria</taxon>
        <taxon>Bacillati</taxon>
        <taxon>Cyanobacteriota</taxon>
        <taxon>Cyanophyceae</taxon>
        <taxon>Synechococcales</taxon>
        <taxon>Synechococcaceae</taxon>
        <taxon>Synechococcus</taxon>
    </lineage>
</organism>
<dbReference type="EMBL" id="CP000240">
    <property type="protein sequence ID" value="ABD03656.1"/>
    <property type="molecule type" value="Genomic_DNA"/>
</dbReference>
<dbReference type="SMR" id="Q2JIA6"/>
<dbReference type="STRING" id="321332.CYB_2731"/>
<dbReference type="KEGG" id="cyb:CYB_2731"/>
<dbReference type="eggNOG" id="COG0249">
    <property type="taxonomic scope" value="Bacteria"/>
</dbReference>
<dbReference type="HOGENOM" id="CLU_002472_1_3_3"/>
<dbReference type="OrthoDB" id="9802448at2"/>
<dbReference type="Proteomes" id="UP000001938">
    <property type="component" value="Chromosome"/>
</dbReference>
<dbReference type="GO" id="GO:0005829">
    <property type="term" value="C:cytosol"/>
    <property type="evidence" value="ECO:0007669"/>
    <property type="project" value="TreeGrafter"/>
</dbReference>
<dbReference type="GO" id="GO:0005524">
    <property type="term" value="F:ATP binding"/>
    <property type="evidence" value="ECO:0007669"/>
    <property type="project" value="UniProtKB-UniRule"/>
</dbReference>
<dbReference type="GO" id="GO:0140664">
    <property type="term" value="F:ATP-dependent DNA damage sensor activity"/>
    <property type="evidence" value="ECO:0007669"/>
    <property type="project" value="InterPro"/>
</dbReference>
<dbReference type="GO" id="GO:0003684">
    <property type="term" value="F:damaged DNA binding"/>
    <property type="evidence" value="ECO:0007669"/>
    <property type="project" value="UniProtKB-UniRule"/>
</dbReference>
<dbReference type="GO" id="GO:0030983">
    <property type="term" value="F:mismatched DNA binding"/>
    <property type="evidence" value="ECO:0007669"/>
    <property type="project" value="InterPro"/>
</dbReference>
<dbReference type="GO" id="GO:0006298">
    <property type="term" value="P:mismatch repair"/>
    <property type="evidence" value="ECO:0007669"/>
    <property type="project" value="UniProtKB-UniRule"/>
</dbReference>
<dbReference type="CDD" id="cd03284">
    <property type="entry name" value="ABC_MutS1"/>
    <property type="match status" value="1"/>
</dbReference>
<dbReference type="FunFam" id="1.10.1420.10:FF:000001">
    <property type="entry name" value="DNA mismatch repair protein MutS"/>
    <property type="match status" value="1"/>
</dbReference>
<dbReference type="FunFam" id="3.40.1170.10:FF:000001">
    <property type="entry name" value="DNA mismatch repair protein MutS"/>
    <property type="match status" value="1"/>
</dbReference>
<dbReference type="FunFam" id="3.40.50.300:FF:000870">
    <property type="entry name" value="MutS protein homolog 4"/>
    <property type="match status" value="1"/>
</dbReference>
<dbReference type="Gene3D" id="1.10.1420.10">
    <property type="match status" value="2"/>
</dbReference>
<dbReference type="Gene3D" id="3.40.1170.10">
    <property type="entry name" value="DNA repair protein MutS, domain I"/>
    <property type="match status" value="1"/>
</dbReference>
<dbReference type="Gene3D" id="3.30.420.110">
    <property type="entry name" value="MutS, connector domain"/>
    <property type="match status" value="1"/>
</dbReference>
<dbReference type="Gene3D" id="3.40.50.300">
    <property type="entry name" value="P-loop containing nucleotide triphosphate hydrolases"/>
    <property type="match status" value="1"/>
</dbReference>
<dbReference type="HAMAP" id="MF_00096">
    <property type="entry name" value="MutS"/>
    <property type="match status" value="1"/>
</dbReference>
<dbReference type="InterPro" id="IPR005748">
    <property type="entry name" value="DNA_mismatch_repair_MutS"/>
</dbReference>
<dbReference type="InterPro" id="IPR007695">
    <property type="entry name" value="DNA_mismatch_repair_MutS-lik_N"/>
</dbReference>
<dbReference type="InterPro" id="IPR017261">
    <property type="entry name" value="DNA_mismatch_repair_MutS/MSH"/>
</dbReference>
<dbReference type="InterPro" id="IPR000432">
    <property type="entry name" value="DNA_mismatch_repair_MutS_C"/>
</dbReference>
<dbReference type="InterPro" id="IPR007861">
    <property type="entry name" value="DNA_mismatch_repair_MutS_clamp"/>
</dbReference>
<dbReference type="InterPro" id="IPR007696">
    <property type="entry name" value="DNA_mismatch_repair_MutS_core"/>
</dbReference>
<dbReference type="InterPro" id="IPR016151">
    <property type="entry name" value="DNA_mismatch_repair_MutS_N"/>
</dbReference>
<dbReference type="InterPro" id="IPR036187">
    <property type="entry name" value="DNA_mismatch_repair_MutS_sf"/>
</dbReference>
<dbReference type="InterPro" id="IPR007860">
    <property type="entry name" value="DNA_mmatch_repair_MutS_con_dom"/>
</dbReference>
<dbReference type="InterPro" id="IPR045076">
    <property type="entry name" value="MutS"/>
</dbReference>
<dbReference type="InterPro" id="IPR036678">
    <property type="entry name" value="MutS_con_dom_sf"/>
</dbReference>
<dbReference type="InterPro" id="IPR027417">
    <property type="entry name" value="P-loop_NTPase"/>
</dbReference>
<dbReference type="NCBIfam" id="TIGR01070">
    <property type="entry name" value="mutS1"/>
    <property type="match status" value="1"/>
</dbReference>
<dbReference type="NCBIfam" id="NF003810">
    <property type="entry name" value="PRK05399.1"/>
    <property type="match status" value="1"/>
</dbReference>
<dbReference type="PANTHER" id="PTHR11361:SF34">
    <property type="entry name" value="DNA MISMATCH REPAIR PROTEIN MSH1, MITOCHONDRIAL"/>
    <property type="match status" value="1"/>
</dbReference>
<dbReference type="PANTHER" id="PTHR11361">
    <property type="entry name" value="DNA MISMATCH REPAIR PROTEIN MUTS FAMILY MEMBER"/>
    <property type="match status" value="1"/>
</dbReference>
<dbReference type="Pfam" id="PF01624">
    <property type="entry name" value="MutS_I"/>
    <property type="match status" value="1"/>
</dbReference>
<dbReference type="Pfam" id="PF05188">
    <property type="entry name" value="MutS_II"/>
    <property type="match status" value="1"/>
</dbReference>
<dbReference type="Pfam" id="PF05192">
    <property type="entry name" value="MutS_III"/>
    <property type="match status" value="1"/>
</dbReference>
<dbReference type="Pfam" id="PF05190">
    <property type="entry name" value="MutS_IV"/>
    <property type="match status" value="1"/>
</dbReference>
<dbReference type="Pfam" id="PF00488">
    <property type="entry name" value="MutS_V"/>
    <property type="match status" value="1"/>
</dbReference>
<dbReference type="PIRSF" id="PIRSF037677">
    <property type="entry name" value="DNA_mis_repair_Msh6"/>
    <property type="match status" value="1"/>
</dbReference>
<dbReference type="SMART" id="SM00534">
    <property type="entry name" value="MUTSac"/>
    <property type="match status" value="1"/>
</dbReference>
<dbReference type="SMART" id="SM00533">
    <property type="entry name" value="MUTSd"/>
    <property type="match status" value="1"/>
</dbReference>
<dbReference type="SUPFAM" id="SSF55271">
    <property type="entry name" value="DNA repair protein MutS, domain I"/>
    <property type="match status" value="1"/>
</dbReference>
<dbReference type="SUPFAM" id="SSF53150">
    <property type="entry name" value="DNA repair protein MutS, domain II"/>
    <property type="match status" value="1"/>
</dbReference>
<dbReference type="SUPFAM" id="SSF48334">
    <property type="entry name" value="DNA repair protein MutS, domain III"/>
    <property type="match status" value="1"/>
</dbReference>
<dbReference type="SUPFAM" id="SSF52540">
    <property type="entry name" value="P-loop containing nucleoside triphosphate hydrolases"/>
    <property type="match status" value="1"/>
</dbReference>
<dbReference type="PROSITE" id="PS00486">
    <property type="entry name" value="DNA_MISMATCH_REPAIR_2"/>
    <property type="match status" value="1"/>
</dbReference>
<feature type="chain" id="PRO_0000335232" description="DNA mismatch repair protein MutS">
    <location>
        <begin position="1"/>
        <end position="884"/>
    </location>
</feature>
<feature type="region of interest" description="Disordered" evidence="2">
    <location>
        <begin position="843"/>
        <end position="884"/>
    </location>
</feature>
<feature type="binding site" evidence="1">
    <location>
        <begin position="651"/>
        <end position="658"/>
    </location>
    <ligand>
        <name>ATP</name>
        <dbReference type="ChEBI" id="CHEBI:30616"/>
    </ligand>
</feature>
<name>MUTS_SYNJB</name>
<reference key="1">
    <citation type="journal article" date="2007" name="ISME J.">
        <title>Population level functional diversity in a microbial community revealed by comparative genomic and metagenomic analyses.</title>
        <authorList>
            <person name="Bhaya D."/>
            <person name="Grossman A.R."/>
            <person name="Steunou A.-S."/>
            <person name="Khuri N."/>
            <person name="Cohan F.M."/>
            <person name="Hamamura N."/>
            <person name="Melendrez M.C."/>
            <person name="Bateson M.M."/>
            <person name="Ward D.M."/>
            <person name="Heidelberg J.F."/>
        </authorList>
    </citation>
    <scope>NUCLEOTIDE SEQUENCE [LARGE SCALE GENOMIC DNA]</scope>
    <source>
        <strain>JA-2-3B'a(2-13)</strain>
    </source>
</reference>
<sequence length="884" mass="98244">MDPALLTPMMQHYVELKRQYPHAILLYRLGDFYEMFFQDAQRVSRELELVLTGREAGAIGRVPMCGIPYHAFDRYAAQLVAKGYALAVCDQMEPADQAKGLVRREVTRVITPGTVLEEELLQARQNNYLAAVVRLKGSKQAPCRWGLAYADISTGEFWVCQSEGQEQLEQELARLQPAEVLLPTEEGLGLGLIRPGDPQKPLGLPNQYAYTLRPAEPFELAVARENLMQTYGLRSLEGLGCEGLPLAVRAAGGLLHYLEETHSPQRCVAPKTLLQPSPQGGHPLLPPPRTYQLTDYLILDAQTRRNLELTQTIREGAFVGSLLWVLDHSRTAMGGRTLRRWLLQPLRDSEQIRLRQDTIQELLENPSLRARLGSLLDSLYDLERLANRVGSGTANPRELVALGSSLGKLPQLAELVGEAKTPLLQSLQQVDPALVDLGRRIEHTLLPSPPPILTEGGLIRPGVDPELDRLRQQVEQDRQWVAQLEKSERDRTGIPTLKVGFNKAFGYYLSISRAKAHQVPKEYIRKQTLTNEERFITPELKEKEARILTAQTDINQREYELFVQLRQEAGSRAEAIRQVAQTLAAVDALFGLAEVAVQQGYTRPLLTTDRRLIIEEGRHPVVEKSLPQGLFVPNSVQLGSPHGPDLIVLTGPNMSGKSTYLRQIGLIQILAQMGSFVPARRAELGLCDRVFTRIGAVDDLATGQSTFMVEMNETANILNHAGERSLVLLDEIGRGTATFDGLSIAWAVAEYLATQVRARTVFATHYHELNQLETLLPNVANFQVVVKELQDRIIFLHQVQPGGADRSYGIEVGRMAGLPQPVIQRAEQVLALVEKHSRIGLGLRNQGKSQPAQKNCKKEPAPNRSPDPAVGDQLSLIPAPLFPD</sequence>
<keyword id="KW-0067">ATP-binding</keyword>
<keyword id="KW-0227">DNA damage</keyword>
<keyword id="KW-0234">DNA repair</keyword>
<keyword id="KW-0238">DNA-binding</keyword>
<keyword id="KW-0547">Nucleotide-binding</keyword>
<keyword id="KW-1185">Reference proteome</keyword>
<gene>
    <name evidence="1" type="primary">mutS</name>
    <name type="ordered locus">CYB_2731</name>
</gene>
<comment type="function">
    <text evidence="1">This protein is involved in the repair of mismatches in DNA. It is possible that it carries out the mismatch recognition step. This protein has a weak ATPase activity.</text>
</comment>
<comment type="similarity">
    <text evidence="1">Belongs to the DNA mismatch repair MutS family.</text>
</comment>
<protein>
    <recommendedName>
        <fullName evidence="1">DNA mismatch repair protein MutS</fullName>
    </recommendedName>
</protein>
<proteinExistence type="inferred from homology"/>